<organism>
    <name type="scientific">Danio rerio</name>
    <name type="common">Zebrafish</name>
    <name type="synonym">Brachydanio rerio</name>
    <dbReference type="NCBI Taxonomy" id="7955"/>
    <lineage>
        <taxon>Eukaryota</taxon>
        <taxon>Metazoa</taxon>
        <taxon>Chordata</taxon>
        <taxon>Craniata</taxon>
        <taxon>Vertebrata</taxon>
        <taxon>Euteleostomi</taxon>
        <taxon>Actinopterygii</taxon>
        <taxon>Neopterygii</taxon>
        <taxon>Teleostei</taxon>
        <taxon>Ostariophysi</taxon>
        <taxon>Cypriniformes</taxon>
        <taxon>Danionidae</taxon>
        <taxon>Danioninae</taxon>
        <taxon>Danio</taxon>
    </lineage>
</organism>
<dbReference type="EMBL" id="BC044483">
    <property type="protein sequence ID" value="AAH44483.1"/>
    <property type="molecule type" value="mRNA"/>
</dbReference>
<dbReference type="RefSeq" id="NP_001157712.1">
    <property type="nucleotide sequence ID" value="NM_001164240.2"/>
</dbReference>
<dbReference type="SMR" id="Q803H4"/>
<dbReference type="STRING" id="7955.ENSDARP00000153106"/>
<dbReference type="iPTMnet" id="Q803H4"/>
<dbReference type="PaxDb" id="7955-ENSDARP00000126317"/>
<dbReference type="Ensembl" id="ENSDART00000181048">
    <property type="protein sequence ID" value="ENSDARP00000153106"/>
    <property type="gene ID" value="ENSDARG00000093022"/>
</dbReference>
<dbReference type="GeneID" id="100302659"/>
<dbReference type="KEGG" id="dre:100302659"/>
<dbReference type="CTD" id="1058"/>
<dbReference type="eggNOG" id="KOG1745">
    <property type="taxonomic scope" value="Eukaryota"/>
</dbReference>
<dbReference type="InParanoid" id="Q803H4"/>
<dbReference type="OMA" id="VHLFEDC"/>
<dbReference type="OrthoDB" id="842664at2759"/>
<dbReference type="TreeFam" id="TF354293"/>
<dbReference type="PRO" id="PR:Q803H4"/>
<dbReference type="Proteomes" id="UP000000437">
    <property type="component" value="Chromosome 8"/>
</dbReference>
<dbReference type="Bgee" id="ENSDARG00000093022">
    <property type="expression patterns" value="Expressed in somite and 49 other cell types or tissues"/>
</dbReference>
<dbReference type="ExpressionAtlas" id="Q803H4">
    <property type="expression patterns" value="baseline and differential"/>
</dbReference>
<dbReference type="GO" id="GO:0000775">
    <property type="term" value="C:chromosome, centromeric region"/>
    <property type="evidence" value="ECO:0007669"/>
    <property type="project" value="UniProtKB-SubCell"/>
</dbReference>
<dbReference type="GO" id="GO:0000786">
    <property type="term" value="C:nucleosome"/>
    <property type="evidence" value="ECO:0007669"/>
    <property type="project" value="UniProtKB-KW"/>
</dbReference>
<dbReference type="GO" id="GO:0005634">
    <property type="term" value="C:nucleus"/>
    <property type="evidence" value="ECO:0000318"/>
    <property type="project" value="GO_Central"/>
</dbReference>
<dbReference type="GO" id="GO:0003677">
    <property type="term" value="F:DNA binding"/>
    <property type="evidence" value="ECO:0007669"/>
    <property type="project" value="UniProtKB-KW"/>
</dbReference>
<dbReference type="GO" id="GO:0046982">
    <property type="term" value="F:protein heterodimerization activity"/>
    <property type="evidence" value="ECO:0007669"/>
    <property type="project" value="InterPro"/>
</dbReference>
<dbReference type="GO" id="GO:0030527">
    <property type="term" value="F:structural constituent of chromatin"/>
    <property type="evidence" value="ECO:0007669"/>
    <property type="project" value="InterPro"/>
</dbReference>
<dbReference type="CDD" id="cd22911">
    <property type="entry name" value="HFD_H3"/>
    <property type="match status" value="1"/>
</dbReference>
<dbReference type="FunFam" id="1.10.20.10:FF:000087">
    <property type="entry name" value="Probable histone 3"/>
    <property type="match status" value="1"/>
</dbReference>
<dbReference type="Gene3D" id="1.10.20.10">
    <property type="entry name" value="Histone, subunit A"/>
    <property type="match status" value="1"/>
</dbReference>
<dbReference type="InterPro" id="IPR009072">
    <property type="entry name" value="Histone-fold"/>
</dbReference>
<dbReference type="InterPro" id="IPR007125">
    <property type="entry name" value="Histone_H2A/H2B/H3"/>
</dbReference>
<dbReference type="InterPro" id="IPR000164">
    <property type="entry name" value="Histone_H3/CENP-A"/>
</dbReference>
<dbReference type="PANTHER" id="PTHR45810:SF17">
    <property type="entry name" value="HISTONE H3-LIKE CENTROMERIC PROTEIN A"/>
    <property type="match status" value="1"/>
</dbReference>
<dbReference type="PANTHER" id="PTHR45810">
    <property type="entry name" value="HISTONE H3.2"/>
    <property type="match status" value="1"/>
</dbReference>
<dbReference type="Pfam" id="PF00125">
    <property type="entry name" value="Histone"/>
    <property type="match status" value="1"/>
</dbReference>
<dbReference type="SMART" id="SM00428">
    <property type="entry name" value="H3"/>
    <property type="match status" value="1"/>
</dbReference>
<dbReference type="SUPFAM" id="SSF47113">
    <property type="entry name" value="Histone-fold"/>
    <property type="match status" value="1"/>
</dbReference>
<dbReference type="PROSITE" id="PS00959">
    <property type="entry name" value="HISTONE_H3_2"/>
    <property type="match status" value="1"/>
</dbReference>
<comment type="function">
    <text evidence="1">Histone H3-like nucleosomal protein that is specifically found in centromeric nucleosomes. Replaces conventional H3 in the nucleosome core of centromeric chromatin that serves as an assembly site for the inner kinetochore. The presence of CENPA subtly modifies the nucleosome structure and the way DNA is wrapped around the nucleosome and gives rise to protruding DNA ends that are less well-ordered and rigid compared to nucleosomes containing histone H3. May serve as an epigenetic mark that propagates centromere identity through replication and cell division. Required for recruitment and assembly of kinetochore proteins, and as a consequence required for progress through mitosis, chromosome segregation and cytokinesis.</text>
</comment>
<comment type="subunit">
    <text evidence="1">Component of centromeric nucleosomes, where DNA is wrapped around a histone octamer core. The octamer contains two molecules each of H2A, H2B, CENPA and H4 assembled in one CENPA-H4 heterotetramer and two H2A-H2B heterodimers. CENPA modulates the DNA-binding characteristics of nucleosomes so that protruding DNA ends have higher flexibility than in nucleosomes containing conventional histone H3.</text>
</comment>
<comment type="subcellular location">
    <subcellularLocation>
        <location evidence="1">Nucleus</location>
    </subcellularLocation>
    <subcellularLocation>
        <location evidence="1">Chromosome</location>
        <location evidence="1">Centromere</location>
    </subcellularLocation>
    <text evidence="1">Localizes exclusively to sites of kinetochore assembly in centromeres. Occupies a compact domain at the inner kinetochore plate stretching across 2 thirds of the length of the constriction but encompassing only one third of the constriction width and height.</text>
</comment>
<comment type="similarity">
    <text evidence="4">Belongs to the histone H3 family.</text>
</comment>
<feature type="chain" id="PRO_0000249469" description="Histone H3-like centromeric protein A">
    <location>
        <begin position="1"/>
        <end position="145"/>
    </location>
</feature>
<feature type="region of interest" description="Disordered" evidence="2">
    <location>
        <begin position="1"/>
        <end position="54"/>
    </location>
</feature>
<feature type="region of interest" description="H3-like">
    <location>
        <begin position="51"/>
        <end position="145"/>
    </location>
</feature>
<feature type="compositionally biased region" description="Basic residues" evidence="2">
    <location>
        <begin position="1"/>
        <end position="19"/>
    </location>
</feature>
<feature type="modified residue" description="Phosphoserine" evidence="3">
    <location>
        <position position="19"/>
    </location>
</feature>
<protein>
    <recommendedName>
        <fullName>Histone H3-like centromeric protein A</fullName>
    </recommendedName>
    <alternativeName>
        <fullName>Centromere protein A</fullName>
        <shortName>CENP-A</shortName>
    </alternativeName>
</protein>
<evidence type="ECO:0000250" key="1">
    <source>
        <dbReference type="UniProtKB" id="P49450"/>
    </source>
</evidence>
<evidence type="ECO:0000256" key="2">
    <source>
        <dbReference type="SAM" id="MobiDB-lite"/>
    </source>
</evidence>
<evidence type="ECO:0000269" key="3">
    <source>
    </source>
</evidence>
<evidence type="ECO:0000305" key="4"/>
<accession>Q803H4</accession>
<sequence length="145" mass="16681">MPRHTSAHKRKPSTPRRRSPPASLPPPAGSRTRRHSGPSGSSPRKKHKFRPGTRALMEIRKYQKSTGLLLRKAPFSRLVREVCQMFSREHMMWQGYALMALQEAAEAFMVRLFSDANLCAIHAKRVTLFPRDIQLARRIRGVEHM</sequence>
<reference key="1">
    <citation type="submission" date="2003-01" db="EMBL/GenBank/DDBJ databases">
        <authorList>
            <consortium name="NIH - Zebrafish Gene Collection (ZGC) project"/>
        </authorList>
    </citation>
    <scope>NUCLEOTIDE SEQUENCE [LARGE SCALE MRNA]</scope>
    <source>
        <strain>AB</strain>
    </source>
</reference>
<reference key="2">
    <citation type="journal article" date="2008" name="J. Proteome Res.">
        <title>Online automated in vivo zebrafish phosphoproteomics: from large-scale analysis down to a single embryo.</title>
        <authorList>
            <person name="Lemeer S."/>
            <person name="Pinkse M.W.H."/>
            <person name="Mohammed S."/>
            <person name="van Breukelen B."/>
            <person name="den Hertog J."/>
            <person name="Slijper M."/>
            <person name="Heck A.J.R."/>
        </authorList>
    </citation>
    <scope>PHOSPHORYLATION [LARGE SCALE ANALYSIS] AT SER-19</scope>
    <scope>IDENTIFICATION BY MASS SPECTROMETRY</scope>
    <source>
        <tissue>Embryo</tissue>
    </source>
</reference>
<gene>
    <name type="primary">cenpa</name>
</gene>
<name>CENPA_DANRE</name>
<keyword id="KW-0137">Centromere</keyword>
<keyword id="KW-0158">Chromosome</keyword>
<keyword id="KW-0238">DNA-binding</keyword>
<keyword id="KW-0544">Nucleosome core</keyword>
<keyword id="KW-0539">Nucleus</keyword>
<keyword id="KW-0597">Phosphoprotein</keyword>
<keyword id="KW-1185">Reference proteome</keyword>
<proteinExistence type="evidence at protein level"/>